<protein>
    <recommendedName>
        <fullName evidence="1">Recombination protein RecR</fullName>
    </recommendedName>
</protein>
<sequence>MFEGPVQNLIDELGKLPGIGPKSAQRIAFHLLSVEPQDIDRLTAVLVKVRDDVRFCTVCGNVSDDERCRICSDTRRDASVVCVVEEPKDVQAVERTREFRGRYHVLGGALDPLSGIGPEQLRIRELLSRIGERVDDVGITEVIIATDPNTEGEATATYLVRMLRDMPGLTVTRIASGLPMGGDLEFADELTLGRALTGRRTMV</sequence>
<accession>O69520</accession>
<evidence type="ECO:0000255" key="1">
    <source>
        <dbReference type="HAMAP-Rule" id="MF_00017"/>
    </source>
</evidence>
<gene>
    <name evidence="1" type="primary">recR</name>
    <name type="ordered locus">ML2329</name>
    <name type="ORF">MLCB2407.21</name>
</gene>
<organism>
    <name type="scientific">Mycobacterium leprae (strain TN)</name>
    <dbReference type="NCBI Taxonomy" id="272631"/>
    <lineage>
        <taxon>Bacteria</taxon>
        <taxon>Bacillati</taxon>
        <taxon>Actinomycetota</taxon>
        <taxon>Actinomycetes</taxon>
        <taxon>Mycobacteriales</taxon>
        <taxon>Mycobacteriaceae</taxon>
        <taxon>Mycobacterium</taxon>
    </lineage>
</organism>
<name>RECR_MYCLE</name>
<dbReference type="EMBL" id="AL023596">
    <property type="protein sequence ID" value="CAA19161.1"/>
    <property type="molecule type" value="Genomic_DNA"/>
</dbReference>
<dbReference type="EMBL" id="AL583925">
    <property type="protein sequence ID" value="CAC31845.1"/>
    <property type="molecule type" value="Genomic_DNA"/>
</dbReference>
<dbReference type="PIR" id="E87200">
    <property type="entry name" value="E87200"/>
</dbReference>
<dbReference type="RefSeq" id="NP_302515.1">
    <property type="nucleotide sequence ID" value="NC_002677.1"/>
</dbReference>
<dbReference type="RefSeq" id="WP_010908835.1">
    <property type="nucleotide sequence ID" value="NC_002677.1"/>
</dbReference>
<dbReference type="SMR" id="O69520"/>
<dbReference type="STRING" id="272631.gene:17576190"/>
<dbReference type="KEGG" id="mle:ML2329"/>
<dbReference type="PATRIC" id="fig|272631.5.peg.4458"/>
<dbReference type="Leproma" id="ML2329"/>
<dbReference type="eggNOG" id="COG0353">
    <property type="taxonomic scope" value="Bacteria"/>
</dbReference>
<dbReference type="HOGENOM" id="CLU_060739_1_0_11"/>
<dbReference type="OrthoDB" id="9802672at2"/>
<dbReference type="Proteomes" id="UP000000806">
    <property type="component" value="Chromosome"/>
</dbReference>
<dbReference type="GO" id="GO:0003677">
    <property type="term" value="F:DNA binding"/>
    <property type="evidence" value="ECO:0007669"/>
    <property type="project" value="UniProtKB-UniRule"/>
</dbReference>
<dbReference type="GO" id="GO:0008270">
    <property type="term" value="F:zinc ion binding"/>
    <property type="evidence" value="ECO:0007669"/>
    <property type="project" value="UniProtKB-KW"/>
</dbReference>
<dbReference type="GO" id="GO:0006310">
    <property type="term" value="P:DNA recombination"/>
    <property type="evidence" value="ECO:0007669"/>
    <property type="project" value="UniProtKB-UniRule"/>
</dbReference>
<dbReference type="GO" id="GO:0006281">
    <property type="term" value="P:DNA repair"/>
    <property type="evidence" value="ECO:0007669"/>
    <property type="project" value="UniProtKB-UniRule"/>
</dbReference>
<dbReference type="CDD" id="cd01025">
    <property type="entry name" value="TOPRIM_recR"/>
    <property type="match status" value="1"/>
</dbReference>
<dbReference type="Gene3D" id="3.30.60.80">
    <property type="match status" value="1"/>
</dbReference>
<dbReference type="Gene3D" id="3.40.1360.10">
    <property type="match status" value="1"/>
</dbReference>
<dbReference type="Gene3D" id="6.10.250.240">
    <property type="match status" value="1"/>
</dbReference>
<dbReference type="Gene3D" id="1.10.8.420">
    <property type="entry name" value="RecR Domain 1"/>
    <property type="match status" value="1"/>
</dbReference>
<dbReference type="HAMAP" id="MF_00017">
    <property type="entry name" value="RecR"/>
    <property type="match status" value="1"/>
</dbReference>
<dbReference type="InterPro" id="IPR000093">
    <property type="entry name" value="DNA_Rcmb_RecR"/>
</dbReference>
<dbReference type="InterPro" id="IPR003583">
    <property type="entry name" value="Hlx-hairpin-Hlx_DNA-bd_motif"/>
</dbReference>
<dbReference type="InterPro" id="IPR023627">
    <property type="entry name" value="Rcmb_RecR"/>
</dbReference>
<dbReference type="InterPro" id="IPR015967">
    <property type="entry name" value="Rcmb_RecR_Znf"/>
</dbReference>
<dbReference type="InterPro" id="IPR006171">
    <property type="entry name" value="TOPRIM_dom"/>
</dbReference>
<dbReference type="InterPro" id="IPR034137">
    <property type="entry name" value="TOPRIM_RecR"/>
</dbReference>
<dbReference type="NCBIfam" id="TIGR00615">
    <property type="entry name" value="recR"/>
    <property type="match status" value="1"/>
</dbReference>
<dbReference type="PANTHER" id="PTHR30446">
    <property type="entry name" value="RECOMBINATION PROTEIN RECR"/>
    <property type="match status" value="1"/>
</dbReference>
<dbReference type="PANTHER" id="PTHR30446:SF0">
    <property type="entry name" value="RECOMBINATION PROTEIN RECR"/>
    <property type="match status" value="1"/>
</dbReference>
<dbReference type="Pfam" id="PF21175">
    <property type="entry name" value="RecR_C"/>
    <property type="match status" value="1"/>
</dbReference>
<dbReference type="Pfam" id="PF21176">
    <property type="entry name" value="RecR_HhH"/>
    <property type="match status" value="1"/>
</dbReference>
<dbReference type="Pfam" id="PF02132">
    <property type="entry name" value="RecR_ZnF"/>
    <property type="match status" value="1"/>
</dbReference>
<dbReference type="Pfam" id="PF13662">
    <property type="entry name" value="Toprim_4"/>
    <property type="match status" value="1"/>
</dbReference>
<dbReference type="SMART" id="SM00278">
    <property type="entry name" value="HhH1"/>
    <property type="match status" value="1"/>
</dbReference>
<dbReference type="SMART" id="SM00493">
    <property type="entry name" value="TOPRIM"/>
    <property type="match status" value="1"/>
</dbReference>
<dbReference type="SUPFAM" id="SSF111304">
    <property type="entry name" value="Recombination protein RecR"/>
    <property type="match status" value="1"/>
</dbReference>
<dbReference type="PROSITE" id="PS01300">
    <property type="entry name" value="RECR"/>
    <property type="match status" value="1"/>
</dbReference>
<dbReference type="PROSITE" id="PS50880">
    <property type="entry name" value="TOPRIM"/>
    <property type="match status" value="1"/>
</dbReference>
<reference key="1">
    <citation type="journal article" date="2001" name="Nature">
        <title>Massive gene decay in the leprosy bacillus.</title>
        <authorList>
            <person name="Cole S.T."/>
            <person name="Eiglmeier K."/>
            <person name="Parkhill J."/>
            <person name="James K.D."/>
            <person name="Thomson N.R."/>
            <person name="Wheeler P.R."/>
            <person name="Honore N."/>
            <person name="Garnier T."/>
            <person name="Churcher C.M."/>
            <person name="Harris D.E."/>
            <person name="Mungall K.L."/>
            <person name="Basham D."/>
            <person name="Brown D."/>
            <person name="Chillingworth T."/>
            <person name="Connor R."/>
            <person name="Davies R.M."/>
            <person name="Devlin K."/>
            <person name="Duthoy S."/>
            <person name="Feltwell T."/>
            <person name="Fraser A."/>
            <person name="Hamlin N."/>
            <person name="Holroyd S."/>
            <person name="Hornsby T."/>
            <person name="Jagels K."/>
            <person name="Lacroix C."/>
            <person name="Maclean J."/>
            <person name="Moule S."/>
            <person name="Murphy L.D."/>
            <person name="Oliver K."/>
            <person name="Quail M.A."/>
            <person name="Rajandream M.A."/>
            <person name="Rutherford K.M."/>
            <person name="Rutter S."/>
            <person name="Seeger K."/>
            <person name="Simon S."/>
            <person name="Simmonds M."/>
            <person name="Skelton J."/>
            <person name="Squares R."/>
            <person name="Squares S."/>
            <person name="Stevens K."/>
            <person name="Taylor K."/>
            <person name="Whitehead S."/>
            <person name="Woodward J.R."/>
            <person name="Barrell B.G."/>
        </authorList>
    </citation>
    <scope>NUCLEOTIDE SEQUENCE [LARGE SCALE GENOMIC DNA]</scope>
    <source>
        <strain>TN</strain>
    </source>
</reference>
<feature type="chain" id="PRO_0000190348" description="Recombination protein RecR">
    <location>
        <begin position="1"/>
        <end position="203"/>
    </location>
</feature>
<feature type="domain" description="Toprim" evidence="1">
    <location>
        <begin position="79"/>
        <end position="179"/>
    </location>
</feature>
<feature type="zinc finger region" description="C4-type" evidence="1">
    <location>
        <begin position="56"/>
        <end position="71"/>
    </location>
</feature>
<keyword id="KW-0227">DNA damage</keyword>
<keyword id="KW-0233">DNA recombination</keyword>
<keyword id="KW-0234">DNA repair</keyword>
<keyword id="KW-0479">Metal-binding</keyword>
<keyword id="KW-1185">Reference proteome</keyword>
<keyword id="KW-0862">Zinc</keyword>
<keyword id="KW-0863">Zinc-finger</keyword>
<comment type="function">
    <text evidence="1">May play a role in DNA repair. It seems to be involved in an RecBC-independent recombinational process of DNA repair. It may act with RecF and RecO.</text>
</comment>
<comment type="similarity">
    <text evidence="1">Belongs to the RecR family.</text>
</comment>
<proteinExistence type="inferred from homology"/>